<keyword id="KW-0067">ATP-binding</keyword>
<keyword id="KW-0963">Cytoplasm</keyword>
<keyword id="KW-0378">Hydrolase</keyword>
<keyword id="KW-0547">Nucleotide-binding</keyword>
<keyword id="KW-0645">Protease</keyword>
<keyword id="KW-0720">Serine protease</keyword>
<keyword id="KW-0346">Stress response</keyword>
<evidence type="ECO:0000255" key="1">
    <source>
        <dbReference type="HAMAP-Rule" id="MF_01973"/>
    </source>
</evidence>
<evidence type="ECO:0000255" key="2">
    <source>
        <dbReference type="PROSITE-ProRule" id="PRU01122"/>
    </source>
</evidence>
<evidence type="ECO:0000255" key="3">
    <source>
        <dbReference type="PROSITE-ProRule" id="PRU01123"/>
    </source>
</evidence>
<name>LON_MESH2</name>
<dbReference type="EC" id="3.4.21.53" evidence="1"/>
<dbReference type="EMBL" id="AE017332">
    <property type="protein sequence ID" value="AAV27942.1"/>
    <property type="molecule type" value="Genomic_DNA"/>
</dbReference>
<dbReference type="RefSeq" id="WP_011206374.1">
    <property type="nucleotide sequence ID" value="NC_006360.1"/>
</dbReference>
<dbReference type="SMR" id="Q600B5"/>
<dbReference type="MEROPS" id="S16.001"/>
<dbReference type="GeneID" id="41334824"/>
<dbReference type="KEGG" id="mhy:mhp541"/>
<dbReference type="eggNOG" id="COG0466">
    <property type="taxonomic scope" value="Bacteria"/>
</dbReference>
<dbReference type="HOGENOM" id="CLU_004109_5_1_14"/>
<dbReference type="PhylomeDB" id="Q600B5"/>
<dbReference type="Proteomes" id="UP000006822">
    <property type="component" value="Chromosome"/>
</dbReference>
<dbReference type="GO" id="GO:0005737">
    <property type="term" value="C:cytoplasm"/>
    <property type="evidence" value="ECO:0007669"/>
    <property type="project" value="UniProtKB-SubCell"/>
</dbReference>
<dbReference type="GO" id="GO:0005524">
    <property type="term" value="F:ATP binding"/>
    <property type="evidence" value="ECO:0007669"/>
    <property type="project" value="UniProtKB-UniRule"/>
</dbReference>
<dbReference type="GO" id="GO:0016887">
    <property type="term" value="F:ATP hydrolysis activity"/>
    <property type="evidence" value="ECO:0007669"/>
    <property type="project" value="UniProtKB-UniRule"/>
</dbReference>
<dbReference type="GO" id="GO:0004176">
    <property type="term" value="F:ATP-dependent peptidase activity"/>
    <property type="evidence" value="ECO:0007669"/>
    <property type="project" value="UniProtKB-UniRule"/>
</dbReference>
<dbReference type="GO" id="GO:0043565">
    <property type="term" value="F:sequence-specific DNA binding"/>
    <property type="evidence" value="ECO:0007669"/>
    <property type="project" value="UniProtKB-UniRule"/>
</dbReference>
<dbReference type="GO" id="GO:0004252">
    <property type="term" value="F:serine-type endopeptidase activity"/>
    <property type="evidence" value="ECO:0007669"/>
    <property type="project" value="UniProtKB-UniRule"/>
</dbReference>
<dbReference type="GO" id="GO:0034605">
    <property type="term" value="P:cellular response to heat"/>
    <property type="evidence" value="ECO:0007669"/>
    <property type="project" value="UniProtKB-UniRule"/>
</dbReference>
<dbReference type="GO" id="GO:0006515">
    <property type="term" value="P:protein quality control for misfolded or incompletely synthesized proteins"/>
    <property type="evidence" value="ECO:0007669"/>
    <property type="project" value="UniProtKB-UniRule"/>
</dbReference>
<dbReference type="CDD" id="cd19500">
    <property type="entry name" value="RecA-like_Lon"/>
    <property type="match status" value="1"/>
</dbReference>
<dbReference type="Gene3D" id="1.10.8.60">
    <property type="match status" value="1"/>
</dbReference>
<dbReference type="Gene3D" id="1.20.5.5270">
    <property type="match status" value="1"/>
</dbReference>
<dbReference type="Gene3D" id="1.20.58.1480">
    <property type="match status" value="1"/>
</dbReference>
<dbReference type="Gene3D" id="3.30.230.10">
    <property type="match status" value="1"/>
</dbReference>
<dbReference type="Gene3D" id="3.40.50.300">
    <property type="entry name" value="P-loop containing nucleotide triphosphate hydrolases"/>
    <property type="match status" value="1"/>
</dbReference>
<dbReference type="HAMAP" id="MF_01973">
    <property type="entry name" value="lon_bact"/>
    <property type="match status" value="1"/>
</dbReference>
<dbReference type="InterPro" id="IPR003593">
    <property type="entry name" value="AAA+_ATPase"/>
</dbReference>
<dbReference type="InterPro" id="IPR003959">
    <property type="entry name" value="ATPase_AAA_core"/>
</dbReference>
<dbReference type="InterPro" id="IPR027543">
    <property type="entry name" value="Lon_bac"/>
</dbReference>
<dbReference type="InterPro" id="IPR004815">
    <property type="entry name" value="Lon_bac/euk-typ"/>
</dbReference>
<dbReference type="InterPro" id="IPR054594">
    <property type="entry name" value="Lon_lid"/>
</dbReference>
<dbReference type="InterPro" id="IPR008269">
    <property type="entry name" value="Lon_proteolytic"/>
</dbReference>
<dbReference type="InterPro" id="IPR027065">
    <property type="entry name" value="Lon_Prtase"/>
</dbReference>
<dbReference type="InterPro" id="IPR003111">
    <property type="entry name" value="Lon_prtase_N"/>
</dbReference>
<dbReference type="InterPro" id="IPR027417">
    <property type="entry name" value="P-loop_NTPase"/>
</dbReference>
<dbReference type="InterPro" id="IPR020568">
    <property type="entry name" value="Ribosomal_Su5_D2-typ_SF"/>
</dbReference>
<dbReference type="InterPro" id="IPR014721">
    <property type="entry name" value="Ribsml_uS5_D2-typ_fold_subgr"/>
</dbReference>
<dbReference type="NCBIfam" id="TIGR00763">
    <property type="entry name" value="lon"/>
    <property type="match status" value="1"/>
</dbReference>
<dbReference type="PANTHER" id="PTHR10046">
    <property type="entry name" value="ATP DEPENDENT LON PROTEASE FAMILY MEMBER"/>
    <property type="match status" value="1"/>
</dbReference>
<dbReference type="Pfam" id="PF00004">
    <property type="entry name" value="AAA"/>
    <property type="match status" value="1"/>
</dbReference>
<dbReference type="Pfam" id="PF05362">
    <property type="entry name" value="Lon_C"/>
    <property type="match status" value="1"/>
</dbReference>
<dbReference type="Pfam" id="PF22667">
    <property type="entry name" value="Lon_lid"/>
    <property type="match status" value="1"/>
</dbReference>
<dbReference type="PRINTS" id="PR00830">
    <property type="entry name" value="ENDOLAPTASE"/>
</dbReference>
<dbReference type="SMART" id="SM00382">
    <property type="entry name" value="AAA"/>
    <property type="match status" value="1"/>
</dbReference>
<dbReference type="SUPFAM" id="SSF52540">
    <property type="entry name" value="P-loop containing nucleoside triphosphate hydrolases"/>
    <property type="match status" value="1"/>
</dbReference>
<dbReference type="SUPFAM" id="SSF54211">
    <property type="entry name" value="Ribosomal protein S5 domain 2-like"/>
    <property type="match status" value="1"/>
</dbReference>
<dbReference type="PROSITE" id="PS51787">
    <property type="entry name" value="LON_N"/>
    <property type="match status" value="1"/>
</dbReference>
<dbReference type="PROSITE" id="PS51786">
    <property type="entry name" value="LON_PROTEOLYTIC"/>
    <property type="match status" value="1"/>
</dbReference>
<protein>
    <recommendedName>
        <fullName evidence="1">Lon protease</fullName>
        <ecNumber evidence="1">3.4.21.53</ecNumber>
    </recommendedName>
    <alternativeName>
        <fullName evidence="1">ATP-dependent protease La</fullName>
    </alternativeName>
</protein>
<accession>Q600B5</accession>
<comment type="function">
    <text evidence="1">ATP-dependent serine protease that mediates the selective degradation of mutant and abnormal proteins as well as certain short-lived regulatory proteins. Required for cellular homeostasis and for survival from DNA damage and developmental changes induced by stress. Degrades polypeptides processively to yield small peptide fragments that are 5 to 10 amino acids long. Binds to DNA in a double-stranded, site-specific manner.</text>
</comment>
<comment type="catalytic activity">
    <reaction evidence="1">
        <text>Hydrolysis of proteins in presence of ATP.</text>
        <dbReference type="EC" id="3.4.21.53"/>
    </reaction>
</comment>
<comment type="subunit">
    <text evidence="1">Homohexamer. Organized in a ring with a central cavity.</text>
</comment>
<comment type="subcellular location">
    <subcellularLocation>
        <location evidence="1">Cytoplasm</location>
    </subcellularLocation>
</comment>
<comment type="induction">
    <text evidence="1">By heat shock.</text>
</comment>
<comment type="similarity">
    <text evidence="1">Belongs to the peptidase S16 family.</text>
</comment>
<organism>
    <name type="scientific">Mesomycoplasma hyopneumoniae (strain 232)</name>
    <name type="common">Mycoplasma hyopneumoniae</name>
    <dbReference type="NCBI Taxonomy" id="295358"/>
    <lineage>
        <taxon>Bacteria</taxon>
        <taxon>Bacillati</taxon>
        <taxon>Mycoplasmatota</taxon>
        <taxon>Mycoplasmoidales</taxon>
        <taxon>Metamycoplasmataceae</taxon>
        <taxon>Mesomycoplasma</taxon>
    </lineage>
</organism>
<proteinExistence type="inferred from homology"/>
<feature type="chain" id="PRO_0000396581" description="Lon protease">
    <location>
        <begin position="1"/>
        <end position="870"/>
    </location>
</feature>
<feature type="domain" description="Lon N-terminal" evidence="3">
    <location>
        <begin position="1"/>
        <end position="270"/>
    </location>
</feature>
<feature type="domain" description="Lon proteolytic" evidence="2">
    <location>
        <begin position="691"/>
        <end position="870"/>
    </location>
</feature>
<feature type="active site" evidence="1">
    <location>
        <position position="777"/>
    </location>
</feature>
<feature type="active site" evidence="1">
    <location>
        <position position="820"/>
    </location>
</feature>
<feature type="binding site" evidence="1">
    <location>
        <begin position="454"/>
        <end position="461"/>
    </location>
    <ligand>
        <name>ATP</name>
        <dbReference type="ChEBI" id="CHEBI:30616"/>
    </ligand>
</feature>
<gene>
    <name evidence="1" type="primary">lon</name>
    <name type="ordered locus">mhp541</name>
</gene>
<sequence>MPTNSYRFLVASEDIYFQNTLQQSITFSDPESIKVLKDFYHSNSRPTLTNKDFLIVYRKEKEKDTKKKNSSVIKFPRNDFNSFEDSKNDIQNQAKILNGKVGDFENSLLPRIYDLDELSKYASLARIQSYRAKTSPDKSEWQTVILDFIVTEKVQLVELINDPQNPKVGQIIIKPVRETIKSPEIHINLINDLLEMARKAKNFRIPTELLLIVDKFGANSEYSTNEYIKGVTNTLSCSPSLTYPQKYQLFSYNSYPAKIKKLYEHIHTFAEQIKLEDEINVILKTNLDKQQTEFILKEKIKAIRKKLGEDSRYEDEIEELLHSELGKKVFPKEVAKTIMRETNKLKSMIVTSPESNITKSYLDLLVALPWKKVKKDILDIKNVREKLEEAHYGLDEIKKRIIEYLAALIHRRSQSEGKPELEKVGSDYIDSNLFLSHKIRKVRSNSIPILTLVGPPGTGKTSIAMAVAEAIGKEFVKISLGGIRDEAEIRGHRRTYVGALPGKIIQALKKVGVSNPLILLDEIDKMGADFKGDPSAAMLEVLDPEQNRFFQDHYLELEYDLSQVLFVATANEIYDIPEPLLDRVEIIELSSYTFIEKIQIAKSHLIPAVLKENALDPKYFPIQDQTIDFLIRHYTREAGVRGLKRVIDKIVRKIIVKLLEKTLDQNFVIDIEFVRELLGIEKYDPDNVDSSPQIGTVTGLGYSPLGGSTLQIEVSTIPGRGDIKLTGSLKDVMQESARIALSYVQSKAKDFGINFDFENTLIHIHVPEGAIPKDGPSAGITFATAIISALSQKPVSHNIAMTGEITLRGKVLAIGGLKEKTMGAYKNGIKIIFIPKANEKNLVDIPQEVKDVIQFIPVDTYQQIYDFIFK</sequence>
<reference key="1">
    <citation type="journal article" date="2004" name="J. Bacteriol.">
        <title>The genome sequence of Mycoplasma hyopneumoniae strain 232, the agent of swine mycoplasmosis.</title>
        <authorList>
            <person name="Minion F.C."/>
            <person name="Lefkowitz E.J."/>
            <person name="Madsen M.L."/>
            <person name="Cleary B.J."/>
            <person name="Swartzell S.M."/>
            <person name="Mahairas G.G."/>
        </authorList>
    </citation>
    <scope>NUCLEOTIDE SEQUENCE [LARGE SCALE GENOMIC DNA]</scope>
    <source>
        <strain>232</strain>
    </source>
</reference>